<dbReference type="EMBL" id="AF195891">
    <property type="protein sequence ID" value="AAG24278.1"/>
    <property type="molecule type" value="mRNA"/>
</dbReference>
<dbReference type="EMBL" id="AC005359">
    <property type="status" value="NOT_ANNOTATED_CDS"/>
    <property type="molecule type" value="Genomic_DNA"/>
</dbReference>
<dbReference type="EMBL" id="AL161513">
    <property type="protein sequence ID" value="CAB78027.1"/>
    <property type="molecule type" value="Genomic_DNA"/>
</dbReference>
<dbReference type="EMBL" id="CP002687">
    <property type="protein sequence ID" value="AEE82714.1"/>
    <property type="molecule type" value="Genomic_DNA"/>
</dbReference>
<dbReference type="EMBL" id="AK229123">
    <property type="protein sequence ID" value="BAF00998.1"/>
    <property type="molecule type" value="mRNA"/>
</dbReference>
<dbReference type="PIR" id="C85091">
    <property type="entry name" value="C85091"/>
</dbReference>
<dbReference type="RefSeq" id="NP_192642.1">
    <property type="nucleotide sequence ID" value="NM_116972.5"/>
</dbReference>
<dbReference type="BioGRID" id="11781">
    <property type="interactions" value="4"/>
</dbReference>
<dbReference type="STRING" id="3702.Q9M0S4"/>
<dbReference type="GlyCosmos" id="Q9M0S4">
    <property type="glycosylation" value="5 sites, No reported glycans"/>
</dbReference>
<dbReference type="GlyGen" id="Q9M0S4">
    <property type="glycosylation" value="5 sites"/>
</dbReference>
<dbReference type="PaxDb" id="3702-AT4G09030.1"/>
<dbReference type="ProteomicsDB" id="245021"/>
<dbReference type="EnsemblPlants" id="AT4G09030.1">
    <property type="protein sequence ID" value="AT4G09030.1"/>
    <property type="gene ID" value="AT4G09030"/>
</dbReference>
<dbReference type="GeneID" id="826482"/>
<dbReference type="Gramene" id="AT4G09030.1">
    <property type="protein sequence ID" value="AT4G09030.1"/>
    <property type="gene ID" value="AT4G09030"/>
</dbReference>
<dbReference type="KEGG" id="ath:AT4G09030"/>
<dbReference type="Araport" id="AT4G09030"/>
<dbReference type="TAIR" id="AT4G09030">
    <property type="gene designation" value="AGP10"/>
</dbReference>
<dbReference type="eggNOG" id="ENOG502RRI8">
    <property type="taxonomic scope" value="Eukaryota"/>
</dbReference>
<dbReference type="HOGENOM" id="CLU_1909540_0_0_1"/>
<dbReference type="InParanoid" id="Q9M0S4"/>
<dbReference type="OrthoDB" id="1114155at2759"/>
<dbReference type="PRO" id="PR:Q9M0S4"/>
<dbReference type="Proteomes" id="UP000006548">
    <property type="component" value="Chromosome 4"/>
</dbReference>
<dbReference type="ExpressionAtlas" id="Q9M0S4">
    <property type="expression patterns" value="baseline and differential"/>
</dbReference>
<dbReference type="GO" id="GO:0005886">
    <property type="term" value="C:plasma membrane"/>
    <property type="evidence" value="ECO:0007669"/>
    <property type="project" value="UniProtKB-SubCell"/>
</dbReference>
<dbReference type="GO" id="GO:0098552">
    <property type="term" value="C:side of membrane"/>
    <property type="evidence" value="ECO:0007669"/>
    <property type="project" value="UniProtKB-KW"/>
</dbReference>
<dbReference type="InterPro" id="IPR044959">
    <property type="entry name" value="AGP"/>
</dbReference>
<dbReference type="PANTHER" id="PTHR36321:SF24">
    <property type="entry name" value="CLASSICAL ARABINOGALACTAN PROTEIN 10-RELATED"/>
    <property type="match status" value="1"/>
</dbReference>
<dbReference type="PANTHER" id="PTHR36321">
    <property type="entry name" value="CLASSICAL ARABINOGALACTAN PROTEIN 9"/>
    <property type="match status" value="1"/>
</dbReference>
<organism>
    <name type="scientific">Arabidopsis thaliana</name>
    <name type="common">Mouse-ear cress</name>
    <dbReference type="NCBI Taxonomy" id="3702"/>
    <lineage>
        <taxon>Eukaryota</taxon>
        <taxon>Viridiplantae</taxon>
        <taxon>Streptophyta</taxon>
        <taxon>Embryophyta</taxon>
        <taxon>Tracheophyta</taxon>
        <taxon>Spermatophyta</taxon>
        <taxon>Magnoliopsida</taxon>
        <taxon>eudicotyledons</taxon>
        <taxon>Gunneridae</taxon>
        <taxon>Pentapetalae</taxon>
        <taxon>rosids</taxon>
        <taxon>malvids</taxon>
        <taxon>Brassicales</taxon>
        <taxon>Brassicaceae</taxon>
        <taxon>Camelineae</taxon>
        <taxon>Arabidopsis</taxon>
    </lineage>
</organism>
<reference key="1">
    <citation type="journal article" date="2000" name="Plant Cell">
        <title>The classical arabinogalactan protein gene family of Arabidopsis.</title>
        <authorList>
            <person name="Schultz C.J."/>
            <person name="Johnson K.L."/>
            <person name="Currie G."/>
            <person name="Bacic A."/>
        </authorList>
    </citation>
    <scope>NUCLEOTIDE SEQUENCE [MRNA]</scope>
    <scope>PROTEIN SEQUENCE OF 22-37</scope>
    <scope>PYROGLUTAMATE FORMATION AT GLN-22</scope>
    <scope>HYDROXYLATION AT PRO-24; PRO-26; PRO-28; PRO-32 AND PRO-36</scope>
    <scope>TISSUE SPECIFICITY</scope>
    <scope>IDENTIFICATION BY MASS SPECTROMETRY</scope>
    <scope>GLYCOSYLATION</scope>
    <scope>GPI-ANCHOR AT ASN-107</scope>
    <source>
        <strain>cv. Columbia</strain>
    </source>
</reference>
<reference key="2">
    <citation type="journal article" date="1999" name="Nature">
        <title>Sequence and analysis of chromosome 4 of the plant Arabidopsis thaliana.</title>
        <authorList>
            <person name="Mayer K.F.X."/>
            <person name="Schueller C."/>
            <person name="Wambutt R."/>
            <person name="Murphy G."/>
            <person name="Volckaert G."/>
            <person name="Pohl T."/>
            <person name="Duesterhoeft A."/>
            <person name="Stiekema W."/>
            <person name="Entian K.-D."/>
            <person name="Terryn N."/>
            <person name="Harris B."/>
            <person name="Ansorge W."/>
            <person name="Brandt P."/>
            <person name="Grivell L.A."/>
            <person name="Rieger M."/>
            <person name="Weichselgartner M."/>
            <person name="de Simone V."/>
            <person name="Obermaier B."/>
            <person name="Mache R."/>
            <person name="Mueller M."/>
            <person name="Kreis M."/>
            <person name="Delseny M."/>
            <person name="Puigdomenech P."/>
            <person name="Watson M."/>
            <person name="Schmidtheini T."/>
            <person name="Reichert B."/>
            <person name="Portetelle D."/>
            <person name="Perez-Alonso M."/>
            <person name="Boutry M."/>
            <person name="Bancroft I."/>
            <person name="Vos P."/>
            <person name="Hoheisel J."/>
            <person name="Zimmermann W."/>
            <person name="Wedler H."/>
            <person name="Ridley P."/>
            <person name="Langham S.-A."/>
            <person name="McCullagh B."/>
            <person name="Bilham L."/>
            <person name="Robben J."/>
            <person name="van der Schueren J."/>
            <person name="Grymonprez B."/>
            <person name="Chuang Y.-J."/>
            <person name="Vandenbussche F."/>
            <person name="Braeken M."/>
            <person name="Weltjens I."/>
            <person name="Voet M."/>
            <person name="Bastiaens I."/>
            <person name="Aert R."/>
            <person name="Defoor E."/>
            <person name="Weitzenegger T."/>
            <person name="Bothe G."/>
            <person name="Ramsperger U."/>
            <person name="Hilbert H."/>
            <person name="Braun M."/>
            <person name="Holzer E."/>
            <person name="Brandt A."/>
            <person name="Peters S."/>
            <person name="van Staveren M."/>
            <person name="Dirkse W."/>
            <person name="Mooijman P."/>
            <person name="Klein Lankhorst R."/>
            <person name="Rose M."/>
            <person name="Hauf J."/>
            <person name="Koetter P."/>
            <person name="Berneiser S."/>
            <person name="Hempel S."/>
            <person name="Feldpausch M."/>
            <person name="Lamberth S."/>
            <person name="Van den Daele H."/>
            <person name="De Keyser A."/>
            <person name="Buysshaert C."/>
            <person name="Gielen J."/>
            <person name="Villarroel R."/>
            <person name="De Clercq R."/>
            <person name="van Montagu M."/>
            <person name="Rogers J."/>
            <person name="Cronin A."/>
            <person name="Quail M.A."/>
            <person name="Bray-Allen S."/>
            <person name="Clark L."/>
            <person name="Doggett J."/>
            <person name="Hall S."/>
            <person name="Kay M."/>
            <person name="Lennard N."/>
            <person name="McLay K."/>
            <person name="Mayes R."/>
            <person name="Pettett A."/>
            <person name="Rajandream M.A."/>
            <person name="Lyne M."/>
            <person name="Benes V."/>
            <person name="Rechmann S."/>
            <person name="Borkova D."/>
            <person name="Bloecker H."/>
            <person name="Scharfe M."/>
            <person name="Grimm M."/>
            <person name="Loehnert T.-H."/>
            <person name="Dose S."/>
            <person name="de Haan M."/>
            <person name="Maarse A.C."/>
            <person name="Schaefer M."/>
            <person name="Mueller-Auer S."/>
            <person name="Gabel C."/>
            <person name="Fuchs M."/>
            <person name="Fartmann B."/>
            <person name="Granderath K."/>
            <person name="Dauner D."/>
            <person name="Herzl A."/>
            <person name="Neumann S."/>
            <person name="Argiriou A."/>
            <person name="Vitale D."/>
            <person name="Liguori R."/>
            <person name="Piravandi E."/>
            <person name="Massenet O."/>
            <person name="Quigley F."/>
            <person name="Clabauld G."/>
            <person name="Muendlein A."/>
            <person name="Felber R."/>
            <person name="Schnabl S."/>
            <person name="Hiller R."/>
            <person name="Schmidt W."/>
            <person name="Lecharny A."/>
            <person name="Aubourg S."/>
            <person name="Chefdor F."/>
            <person name="Cooke R."/>
            <person name="Berger C."/>
            <person name="Monfort A."/>
            <person name="Casacuberta E."/>
            <person name="Gibbons T."/>
            <person name="Weber N."/>
            <person name="Vandenbol M."/>
            <person name="Bargues M."/>
            <person name="Terol J."/>
            <person name="Torres A."/>
            <person name="Perez-Perez A."/>
            <person name="Purnelle B."/>
            <person name="Bent E."/>
            <person name="Johnson S."/>
            <person name="Tacon D."/>
            <person name="Jesse T."/>
            <person name="Heijnen L."/>
            <person name="Schwarz S."/>
            <person name="Scholler P."/>
            <person name="Heber S."/>
            <person name="Francs P."/>
            <person name="Bielke C."/>
            <person name="Frishman D."/>
            <person name="Haase D."/>
            <person name="Lemcke K."/>
            <person name="Mewes H.-W."/>
            <person name="Stocker S."/>
            <person name="Zaccaria P."/>
            <person name="Bevan M."/>
            <person name="Wilson R.K."/>
            <person name="de la Bastide M."/>
            <person name="Habermann K."/>
            <person name="Parnell L."/>
            <person name="Dedhia N."/>
            <person name="Gnoj L."/>
            <person name="Schutz K."/>
            <person name="Huang E."/>
            <person name="Spiegel L."/>
            <person name="Sekhon M."/>
            <person name="Murray J."/>
            <person name="Sheet P."/>
            <person name="Cordes M."/>
            <person name="Abu-Threideh J."/>
            <person name="Stoneking T."/>
            <person name="Kalicki J."/>
            <person name="Graves T."/>
            <person name="Harmon G."/>
            <person name="Edwards J."/>
            <person name="Latreille P."/>
            <person name="Courtney L."/>
            <person name="Cloud J."/>
            <person name="Abbott A."/>
            <person name="Scott K."/>
            <person name="Johnson D."/>
            <person name="Minx P."/>
            <person name="Bentley D."/>
            <person name="Fulton B."/>
            <person name="Miller N."/>
            <person name="Greco T."/>
            <person name="Kemp K."/>
            <person name="Kramer J."/>
            <person name="Fulton L."/>
            <person name="Mardis E."/>
            <person name="Dante M."/>
            <person name="Pepin K."/>
            <person name="Hillier L.W."/>
            <person name="Nelson J."/>
            <person name="Spieth J."/>
            <person name="Ryan E."/>
            <person name="Andrews S."/>
            <person name="Geisel C."/>
            <person name="Layman D."/>
            <person name="Du H."/>
            <person name="Ali J."/>
            <person name="Berghoff A."/>
            <person name="Jones K."/>
            <person name="Drone K."/>
            <person name="Cotton M."/>
            <person name="Joshu C."/>
            <person name="Antonoiu B."/>
            <person name="Zidanic M."/>
            <person name="Strong C."/>
            <person name="Sun H."/>
            <person name="Lamar B."/>
            <person name="Yordan C."/>
            <person name="Ma P."/>
            <person name="Zhong J."/>
            <person name="Preston R."/>
            <person name="Vil D."/>
            <person name="Shekher M."/>
            <person name="Matero A."/>
            <person name="Shah R."/>
            <person name="Swaby I.K."/>
            <person name="O'Shaughnessy A."/>
            <person name="Rodriguez M."/>
            <person name="Hoffman J."/>
            <person name="Till S."/>
            <person name="Granat S."/>
            <person name="Shohdy N."/>
            <person name="Hasegawa A."/>
            <person name="Hameed A."/>
            <person name="Lodhi M."/>
            <person name="Johnson A."/>
            <person name="Chen E."/>
            <person name="Marra M.A."/>
            <person name="Martienssen R."/>
            <person name="McCombie W.R."/>
        </authorList>
    </citation>
    <scope>NUCLEOTIDE SEQUENCE [LARGE SCALE GENOMIC DNA]</scope>
    <source>
        <strain>cv. Columbia</strain>
    </source>
</reference>
<reference key="3">
    <citation type="journal article" date="2017" name="Plant J.">
        <title>Araport11: a complete reannotation of the Arabidopsis thaliana reference genome.</title>
        <authorList>
            <person name="Cheng C.Y."/>
            <person name="Krishnakumar V."/>
            <person name="Chan A.P."/>
            <person name="Thibaud-Nissen F."/>
            <person name="Schobel S."/>
            <person name="Town C.D."/>
        </authorList>
    </citation>
    <scope>GENOME REANNOTATION</scope>
    <source>
        <strain>cv. Columbia</strain>
    </source>
</reference>
<reference key="4">
    <citation type="submission" date="2006-07" db="EMBL/GenBank/DDBJ databases">
        <title>Large-scale analysis of RIKEN Arabidopsis full-length (RAFL) cDNAs.</title>
        <authorList>
            <person name="Totoki Y."/>
            <person name="Seki M."/>
            <person name="Ishida J."/>
            <person name="Nakajima M."/>
            <person name="Enju A."/>
            <person name="Kamiya A."/>
            <person name="Narusaka M."/>
            <person name="Shin-i T."/>
            <person name="Nakagawa M."/>
            <person name="Sakamoto N."/>
            <person name="Oishi K."/>
            <person name="Kohara Y."/>
            <person name="Kobayashi M."/>
            <person name="Toyoda A."/>
            <person name="Sakaki Y."/>
            <person name="Sakurai T."/>
            <person name="Iida K."/>
            <person name="Akiyama K."/>
            <person name="Satou M."/>
            <person name="Toyoda T."/>
            <person name="Konagaya A."/>
            <person name="Carninci P."/>
            <person name="Kawai J."/>
            <person name="Hayashizaki Y."/>
            <person name="Shinozaki K."/>
        </authorList>
    </citation>
    <scope>NUCLEOTIDE SEQUENCE [LARGE SCALE MRNA]</scope>
    <source>
        <strain>cv. Columbia</strain>
    </source>
</reference>
<reference key="5">
    <citation type="journal article" date="2002" name="Plant Physiol.">
        <title>Using genomic resources to guide research directions. The arabinogalactan protein gene family as a test case.</title>
        <authorList>
            <person name="Schultz C.J."/>
            <person name="Rumsewicz M.P."/>
            <person name="Johnson K.L."/>
            <person name="Jones B.J."/>
            <person name="Gaspar Y.M."/>
            <person name="Bacic A."/>
        </authorList>
    </citation>
    <scope>GENE FAMILY</scope>
    <scope>NOMENCLATURE</scope>
</reference>
<feature type="signal peptide" evidence="3">
    <location>
        <begin position="1"/>
        <end position="21"/>
    </location>
</feature>
<feature type="chain" id="PRO_0000269001" description="Classical arabinogalactan protein 10">
    <location>
        <begin position="22"/>
        <end position="107"/>
    </location>
</feature>
<feature type="propeptide" id="PRO_0000269002" description="Removed in mature form">
    <location>
        <begin position="108"/>
        <end position="127"/>
    </location>
</feature>
<feature type="region of interest" description="Disordered" evidence="2">
    <location>
        <begin position="22"/>
        <end position="107"/>
    </location>
</feature>
<feature type="compositionally biased region" description="Pro residues" evidence="2">
    <location>
        <begin position="25"/>
        <end position="39"/>
    </location>
</feature>
<feature type="compositionally biased region" description="Pro residues" evidence="2">
    <location>
        <begin position="48"/>
        <end position="58"/>
    </location>
</feature>
<feature type="compositionally biased region" description="Pro residues" evidence="2">
    <location>
        <begin position="66"/>
        <end position="86"/>
    </location>
</feature>
<feature type="compositionally biased region" description="Polar residues" evidence="2">
    <location>
        <begin position="98"/>
        <end position="107"/>
    </location>
</feature>
<feature type="modified residue" description="Pyrrolidone carboxylic acid" evidence="3">
    <location>
        <position position="22"/>
    </location>
</feature>
<feature type="modified residue" description="4-hydroxyproline" evidence="3">
    <location>
        <position position="24"/>
    </location>
</feature>
<feature type="modified residue" description="4-hydroxyproline" evidence="3">
    <location>
        <position position="26"/>
    </location>
</feature>
<feature type="modified residue" description="4-hydroxyproline" evidence="3">
    <location>
        <position position="28"/>
    </location>
</feature>
<feature type="modified residue" description="4-hydroxyproline" evidence="3">
    <location>
        <position position="32"/>
    </location>
</feature>
<feature type="modified residue" description="4-hydroxyproline" evidence="3">
    <location>
        <position position="36"/>
    </location>
</feature>
<feature type="lipid moiety-binding region" description="GPI-anchor amidated asparagine" evidence="3">
    <location>
        <position position="107"/>
    </location>
</feature>
<feature type="glycosylation site" description="O-linked (Ara...) hydroxyproline" evidence="1">
    <location>
        <position position="24"/>
    </location>
</feature>
<feature type="glycosylation site" description="O-linked (Ara...) hydroxyproline" evidence="1">
    <location>
        <position position="26"/>
    </location>
</feature>
<feature type="glycosylation site" description="O-linked (Ara...) hydroxyproline" evidence="1">
    <location>
        <position position="28"/>
    </location>
</feature>
<feature type="glycosylation site" description="O-linked (Ara...) hydroxyproline" evidence="1">
    <location>
        <position position="32"/>
    </location>
</feature>
<feature type="glycosylation site" description="O-linked (Ara...) hydroxyproline" evidence="1">
    <location>
        <position position="36"/>
    </location>
</feature>
<proteinExistence type="evidence at protein level"/>
<keyword id="KW-1003">Cell membrane</keyword>
<keyword id="KW-0903">Direct protein sequencing</keyword>
<keyword id="KW-0325">Glycoprotein</keyword>
<keyword id="KW-0336">GPI-anchor</keyword>
<keyword id="KW-0379">Hydroxylation</keyword>
<keyword id="KW-0449">Lipoprotein</keyword>
<keyword id="KW-0472">Membrane</keyword>
<keyword id="KW-0654">Proteoglycan</keyword>
<keyword id="KW-0873">Pyrrolidone carboxylic acid</keyword>
<keyword id="KW-1185">Reference proteome</keyword>
<keyword id="KW-0732">Signal</keyword>
<protein>
    <recommendedName>
        <fullName>Classical arabinogalactan protein 10</fullName>
    </recommendedName>
</protein>
<evidence type="ECO:0000255" key="1"/>
<evidence type="ECO:0000256" key="2">
    <source>
        <dbReference type="SAM" id="MobiDB-lite"/>
    </source>
</evidence>
<evidence type="ECO:0000269" key="3">
    <source>
    </source>
</evidence>
<evidence type="ECO:0000305" key="4"/>
<accession>Q9M0S4</accession>
<sequence>MASKSVVVLLFLALIASSAIAQAPGPAPTRSPLPSPAQPPRTAAPTPSITPTPTPTPSATPTAAPVSPPAGSPLPSSASPPAPPTSLTPDGAPVAGPTGSTPVDNNNAATLAAGSLAGFVFVASLLL</sequence>
<comment type="function">
    <text>Proteoglycan that seems to be implicated in diverse developmental roles such as differentiation, cell-cell recognition, embryogenesis and programmed cell death.</text>
</comment>
<comment type="subcellular location">
    <subcellularLocation>
        <location evidence="4">Cell membrane</location>
        <topology evidence="4">Lipid-anchor</topology>
        <topology evidence="4">GPI-anchor</topology>
    </subcellularLocation>
</comment>
<comment type="tissue specificity">
    <text evidence="3">Predominantly expressed in flowers and at a lower level in roots and siliques.</text>
</comment>
<comment type="PTM">
    <text evidence="3">O-glycosylated on hydroxyprolines; noncontiguous hydroxylproline residues are glycosylated with arabinogalactan.</text>
</comment>
<comment type="similarity">
    <text evidence="4">Belongs to the classical AGP family.</text>
</comment>
<gene>
    <name type="primary">AGP10</name>
    <name type="ordered locus">At4g09030</name>
    <name type="ORF">F23J3.60</name>
</gene>
<name>AGP10_ARATH</name>